<reference key="1">
    <citation type="journal article" date="2006" name="Proc. Natl. Acad. Sci. U.S.A.">
        <title>Genome reduction in Leptospira borgpetersenii reflects limited transmission potential.</title>
        <authorList>
            <person name="Bulach D.M."/>
            <person name="Zuerner R.L."/>
            <person name="Wilson P."/>
            <person name="Seemann T."/>
            <person name="McGrath A."/>
            <person name="Cullen P.A."/>
            <person name="Davis J."/>
            <person name="Johnson M."/>
            <person name="Kuczek E."/>
            <person name="Alt D.P."/>
            <person name="Peterson-Burch B."/>
            <person name="Coppel R.L."/>
            <person name="Rood J.I."/>
            <person name="Davies J.K."/>
            <person name="Adler B."/>
        </authorList>
    </citation>
    <scope>NUCLEOTIDE SEQUENCE [LARGE SCALE GENOMIC DNA]</scope>
    <source>
        <strain>JB197</strain>
    </source>
</reference>
<evidence type="ECO:0000255" key="1">
    <source>
        <dbReference type="HAMAP-Rule" id="MF_00135"/>
    </source>
</evidence>
<keyword id="KW-0028">Amino-acid biosynthesis</keyword>
<keyword id="KW-0057">Aromatic amino acid biosynthesis</keyword>
<keyword id="KW-0413">Isomerase</keyword>
<keyword id="KW-0822">Tryptophan biosynthesis</keyword>
<organism>
    <name type="scientific">Leptospira borgpetersenii serovar Hardjo-bovis (strain JB197)</name>
    <dbReference type="NCBI Taxonomy" id="355277"/>
    <lineage>
        <taxon>Bacteria</taxon>
        <taxon>Pseudomonadati</taxon>
        <taxon>Spirochaetota</taxon>
        <taxon>Spirochaetia</taxon>
        <taxon>Leptospirales</taxon>
        <taxon>Leptospiraceae</taxon>
        <taxon>Leptospira</taxon>
    </lineage>
</organism>
<protein>
    <recommendedName>
        <fullName evidence="1">N-(5'-phosphoribosyl)anthranilate isomerase</fullName>
        <shortName evidence="1">PRAI</shortName>
        <ecNumber evidence="1">5.3.1.24</ecNumber>
    </recommendedName>
</protein>
<gene>
    <name evidence="1" type="primary">trpF</name>
    <name type="ordered locus">LBJ_1866</name>
</gene>
<name>TRPF_LEPBJ</name>
<comment type="catalytic activity">
    <reaction evidence="1">
        <text>N-(5-phospho-beta-D-ribosyl)anthranilate = 1-(2-carboxyphenylamino)-1-deoxy-D-ribulose 5-phosphate</text>
        <dbReference type="Rhea" id="RHEA:21540"/>
        <dbReference type="ChEBI" id="CHEBI:18277"/>
        <dbReference type="ChEBI" id="CHEBI:58613"/>
        <dbReference type="EC" id="5.3.1.24"/>
    </reaction>
</comment>
<comment type="pathway">
    <text evidence="1">Amino-acid biosynthesis; L-tryptophan biosynthesis; L-tryptophan from chorismate: step 3/5.</text>
</comment>
<comment type="similarity">
    <text evidence="1">Belongs to the TrpF family.</text>
</comment>
<proteinExistence type="inferred from homology"/>
<feature type="chain" id="PRO_1000197105" description="N-(5'-phosphoribosyl)anthranilate isomerase">
    <location>
        <begin position="1"/>
        <end position="216"/>
    </location>
</feature>
<sequence>MNENTFEKTKIKICGIRDLEIAKICREEGADYIGLNFVPSSPRKISLKDAQKIVEFYRDTKNSPEIVLLFYQNSPEEIRTVTSSLYHDLIQWVWDDPKLTFVDRKNFLGKRQICSYRVNSPIYNEDLKNIPSELLILDSYSKDAGGGTGETFNWNFISRIERKFLLAGGLNSSNVSNAIRTVKPYGVDVASGVESSPGIKDSQKVIQFIRNVRLGL</sequence>
<dbReference type="EC" id="5.3.1.24" evidence="1"/>
<dbReference type="EMBL" id="CP000350">
    <property type="protein sequence ID" value="ABJ76387.1"/>
    <property type="molecule type" value="Genomic_DNA"/>
</dbReference>
<dbReference type="RefSeq" id="WP_011670113.1">
    <property type="nucleotide sequence ID" value="NC_008510.1"/>
</dbReference>
<dbReference type="SMR" id="Q04RT3"/>
<dbReference type="KEGG" id="lbj:LBJ_1866"/>
<dbReference type="HOGENOM" id="CLU_076364_2_0_12"/>
<dbReference type="UniPathway" id="UPA00035">
    <property type="reaction ID" value="UER00042"/>
</dbReference>
<dbReference type="Proteomes" id="UP000000656">
    <property type="component" value="Chromosome 1"/>
</dbReference>
<dbReference type="GO" id="GO:0004640">
    <property type="term" value="F:phosphoribosylanthranilate isomerase activity"/>
    <property type="evidence" value="ECO:0007669"/>
    <property type="project" value="UniProtKB-UniRule"/>
</dbReference>
<dbReference type="GO" id="GO:0000162">
    <property type="term" value="P:L-tryptophan biosynthetic process"/>
    <property type="evidence" value="ECO:0007669"/>
    <property type="project" value="UniProtKB-UniRule"/>
</dbReference>
<dbReference type="CDD" id="cd00405">
    <property type="entry name" value="PRAI"/>
    <property type="match status" value="1"/>
</dbReference>
<dbReference type="Gene3D" id="3.20.20.70">
    <property type="entry name" value="Aldolase class I"/>
    <property type="match status" value="1"/>
</dbReference>
<dbReference type="HAMAP" id="MF_00135">
    <property type="entry name" value="PRAI"/>
    <property type="match status" value="1"/>
</dbReference>
<dbReference type="InterPro" id="IPR013785">
    <property type="entry name" value="Aldolase_TIM"/>
</dbReference>
<dbReference type="InterPro" id="IPR001240">
    <property type="entry name" value="PRAI_dom"/>
</dbReference>
<dbReference type="InterPro" id="IPR011060">
    <property type="entry name" value="RibuloseP-bd_barrel"/>
</dbReference>
<dbReference type="InterPro" id="IPR044643">
    <property type="entry name" value="TrpF_fam"/>
</dbReference>
<dbReference type="PANTHER" id="PTHR42894">
    <property type="entry name" value="N-(5'-PHOSPHORIBOSYL)ANTHRANILATE ISOMERASE"/>
    <property type="match status" value="1"/>
</dbReference>
<dbReference type="PANTHER" id="PTHR42894:SF1">
    <property type="entry name" value="N-(5'-PHOSPHORIBOSYL)ANTHRANILATE ISOMERASE"/>
    <property type="match status" value="1"/>
</dbReference>
<dbReference type="Pfam" id="PF00697">
    <property type="entry name" value="PRAI"/>
    <property type="match status" value="1"/>
</dbReference>
<dbReference type="SUPFAM" id="SSF51366">
    <property type="entry name" value="Ribulose-phoshate binding barrel"/>
    <property type="match status" value="1"/>
</dbReference>
<accession>Q04RT3</accession>